<dbReference type="EC" id="2.7.2.3" evidence="1"/>
<dbReference type="EMBL" id="CP000961">
    <property type="protein sequence ID" value="ACA85172.1"/>
    <property type="molecule type" value="Genomic_DNA"/>
</dbReference>
<dbReference type="RefSeq" id="WP_012323519.1">
    <property type="nucleotide sequence ID" value="NC_010506.1"/>
</dbReference>
<dbReference type="SMR" id="B1KF21"/>
<dbReference type="STRING" id="392500.Swoo_0878"/>
<dbReference type="KEGG" id="swd:Swoo_0878"/>
<dbReference type="eggNOG" id="COG0126">
    <property type="taxonomic scope" value="Bacteria"/>
</dbReference>
<dbReference type="HOGENOM" id="CLU_025427_0_2_6"/>
<dbReference type="UniPathway" id="UPA00109">
    <property type="reaction ID" value="UER00185"/>
</dbReference>
<dbReference type="Proteomes" id="UP000002168">
    <property type="component" value="Chromosome"/>
</dbReference>
<dbReference type="GO" id="GO:0005829">
    <property type="term" value="C:cytosol"/>
    <property type="evidence" value="ECO:0007669"/>
    <property type="project" value="TreeGrafter"/>
</dbReference>
<dbReference type="GO" id="GO:0043531">
    <property type="term" value="F:ADP binding"/>
    <property type="evidence" value="ECO:0007669"/>
    <property type="project" value="TreeGrafter"/>
</dbReference>
<dbReference type="GO" id="GO:0005524">
    <property type="term" value="F:ATP binding"/>
    <property type="evidence" value="ECO:0007669"/>
    <property type="project" value="UniProtKB-KW"/>
</dbReference>
<dbReference type="GO" id="GO:0004618">
    <property type="term" value="F:phosphoglycerate kinase activity"/>
    <property type="evidence" value="ECO:0007669"/>
    <property type="project" value="UniProtKB-UniRule"/>
</dbReference>
<dbReference type="GO" id="GO:0006094">
    <property type="term" value="P:gluconeogenesis"/>
    <property type="evidence" value="ECO:0007669"/>
    <property type="project" value="TreeGrafter"/>
</dbReference>
<dbReference type="GO" id="GO:0006096">
    <property type="term" value="P:glycolytic process"/>
    <property type="evidence" value="ECO:0007669"/>
    <property type="project" value="UniProtKB-UniRule"/>
</dbReference>
<dbReference type="FunFam" id="3.40.50.1260:FF:000001">
    <property type="entry name" value="Phosphoglycerate kinase"/>
    <property type="match status" value="1"/>
</dbReference>
<dbReference type="FunFam" id="3.40.50.1260:FF:000002">
    <property type="entry name" value="Phosphoglycerate kinase"/>
    <property type="match status" value="1"/>
</dbReference>
<dbReference type="Gene3D" id="3.40.50.1260">
    <property type="entry name" value="Phosphoglycerate kinase, N-terminal domain"/>
    <property type="match status" value="2"/>
</dbReference>
<dbReference type="HAMAP" id="MF_00145">
    <property type="entry name" value="Phosphoglyc_kinase"/>
    <property type="match status" value="1"/>
</dbReference>
<dbReference type="InterPro" id="IPR001576">
    <property type="entry name" value="Phosphoglycerate_kinase"/>
</dbReference>
<dbReference type="InterPro" id="IPR015911">
    <property type="entry name" value="Phosphoglycerate_kinase_CS"/>
</dbReference>
<dbReference type="InterPro" id="IPR015824">
    <property type="entry name" value="Phosphoglycerate_kinase_N"/>
</dbReference>
<dbReference type="InterPro" id="IPR036043">
    <property type="entry name" value="Phosphoglycerate_kinase_sf"/>
</dbReference>
<dbReference type="PANTHER" id="PTHR11406">
    <property type="entry name" value="PHOSPHOGLYCERATE KINASE"/>
    <property type="match status" value="1"/>
</dbReference>
<dbReference type="PANTHER" id="PTHR11406:SF23">
    <property type="entry name" value="PHOSPHOGLYCERATE KINASE 1, CHLOROPLASTIC-RELATED"/>
    <property type="match status" value="1"/>
</dbReference>
<dbReference type="Pfam" id="PF00162">
    <property type="entry name" value="PGK"/>
    <property type="match status" value="1"/>
</dbReference>
<dbReference type="PIRSF" id="PIRSF000724">
    <property type="entry name" value="Pgk"/>
    <property type="match status" value="1"/>
</dbReference>
<dbReference type="PRINTS" id="PR00477">
    <property type="entry name" value="PHGLYCKINASE"/>
</dbReference>
<dbReference type="SUPFAM" id="SSF53748">
    <property type="entry name" value="Phosphoglycerate kinase"/>
    <property type="match status" value="1"/>
</dbReference>
<dbReference type="PROSITE" id="PS00111">
    <property type="entry name" value="PGLYCERATE_KINASE"/>
    <property type="match status" value="1"/>
</dbReference>
<organism>
    <name type="scientific">Shewanella woodyi (strain ATCC 51908 / MS32)</name>
    <dbReference type="NCBI Taxonomy" id="392500"/>
    <lineage>
        <taxon>Bacteria</taxon>
        <taxon>Pseudomonadati</taxon>
        <taxon>Pseudomonadota</taxon>
        <taxon>Gammaproteobacteria</taxon>
        <taxon>Alteromonadales</taxon>
        <taxon>Shewanellaceae</taxon>
        <taxon>Shewanella</taxon>
    </lineage>
</organism>
<accession>B1KF21</accession>
<sequence length="391" mass="40624">MAIINMSELDLQGKRVLIREDLNVPVSEGVVTSDARLRAALPSIKLALEKGAAVMVMSHLGRPTEGEFNSEFSLQPVVDYLTKALSCPVRLAKDYLDGVEANVGEVVVFENVRFNVGEKKNDEALAKKLAALCDVYVMDAFGTAHRAQASTHGVGLHAPIACAGPLLAGELEALGKAMDNPARPLVAIVGGSKVSTKLTVLESLSKIVDQLVVGGGIANTFIAAAGHEVGKSLYEADLIDEAKRLAANAQSRGGDIPVPTDVVVAGEFSPTAAATLKGVSQVSADEMIFDIGPDSSEALAEILKNAGTIVWNGPVGVFEFDQFGEGTKRIAAAIADSSAFSIAGGGDTLAAVDKYGIADKVSYISTGGGAFLEFLEGKELPAVAMLESRGK</sequence>
<gene>
    <name evidence="1" type="primary">pgk</name>
    <name type="ordered locus">Swoo_0878</name>
</gene>
<reference key="1">
    <citation type="submission" date="2008-02" db="EMBL/GenBank/DDBJ databases">
        <title>Complete sequence of Shewanella woodyi ATCC 51908.</title>
        <authorList>
            <consortium name="US DOE Joint Genome Institute"/>
            <person name="Copeland A."/>
            <person name="Lucas S."/>
            <person name="Lapidus A."/>
            <person name="Glavina del Rio T."/>
            <person name="Dalin E."/>
            <person name="Tice H."/>
            <person name="Bruce D."/>
            <person name="Goodwin L."/>
            <person name="Pitluck S."/>
            <person name="Sims D."/>
            <person name="Brettin T."/>
            <person name="Detter J.C."/>
            <person name="Han C."/>
            <person name="Kuske C.R."/>
            <person name="Schmutz J."/>
            <person name="Larimer F."/>
            <person name="Land M."/>
            <person name="Hauser L."/>
            <person name="Kyrpides N."/>
            <person name="Lykidis A."/>
            <person name="Zhao J.-S."/>
            <person name="Richardson P."/>
        </authorList>
    </citation>
    <scope>NUCLEOTIDE SEQUENCE [LARGE SCALE GENOMIC DNA]</scope>
    <source>
        <strain>ATCC 51908 / MS32</strain>
    </source>
</reference>
<protein>
    <recommendedName>
        <fullName evidence="1">Phosphoglycerate kinase</fullName>
        <ecNumber evidence="1">2.7.2.3</ecNumber>
    </recommendedName>
</protein>
<comment type="catalytic activity">
    <reaction evidence="1">
        <text>(2R)-3-phosphoglycerate + ATP = (2R)-3-phospho-glyceroyl phosphate + ADP</text>
        <dbReference type="Rhea" id="RHEA:14801"/>
        <dbReference type="ChEBI" id="CHEBI:30616"/>
        <dbReference type="ChEBI" id="CHEBI:57604"/>
        <dbReference type="ChEBI" id="CHEBI:58272"/>
        <dbReference type="ChEBI" id="CHEBI:456216"/>
        <dbReference type="EC" id="2.7.2.3"/>
    </reaction>
</comment>
<comment type="pathway">
    <text evidence="1">Carbohydrate degradation; glycolysis; pyruvate from D-glyceraldehyde 3-phosphate: step 2/5.</text>
</comment>
<comment type="subunit">
    <text evidence="1">Monomer.</text>
</comment>
<comment type="subcellular location">
    <subcellularLocation>
        <location evidence="1">Cytoplasm</location>
    </subcellularLocation>
</comment>
<comment type="similarity">
    <text evidence="1">Belongs to the phosphoglycerate kinase family.</text>
</comment>
<name>PGK_SHEWM</name>
<keyword id="KW-0067">ATP-binding</keyword>
<keyword id="KW-0963">Cytoplasm</keyword>
<keyword id="KW-0324">Glycolysis</keyword>
<keyword id="KW-0418">Kinase</keyword>
<keyword id="KW-0547">Nucleotide-binding</keyword>
<keyword id="KW-1185">Reference proteome</keyword>
<keyword id="KW-0808">Transferase</keyword>
<feature type="chain" id="PRO_1000096377" description="Phosphoglycerate kinase">
    <location>
        <begin position="1"/>
        <end position="391"/>
    </location>
</feature>
<feature type="binding site" evidence="1">
    <location>
        <begin position="21"/>
        <end position="23"/>
    </location>
    <ligand>
        <name>substrate</name>
    </ligand>
</feature>
<feature type="binding site" evidence="1">
    <location>
        <position position="36"/>
    </location>
    <ligand>
        <name>substrate</name>
    </ligand>
</feature>
<feature type="binding site" evidence="1">
    <location>
        <begin position="59"/>
        <end position="62"/>
    </location>
    <ligand>
        <name>substrate</name>
    </ligand>
</feature>
<feature type="binding site" evidence="1">
    <location>
        <position position="113"/>
    </location>
    <ligand>
        <name>substrate</name>
    </ligand>
</feature>
<feature type="binding site" evidence="1">
    <location>
        <position position="146"/>
    </location>
    <ligand>
        <name>substrate</name>
    </ligand>
</feature>
<feature type="binding site" evidence="1">
    <location>
        <position position="197"/>
    </location>
    <ligand>
        <name>ATP</name>
        <dbReference type="ChEBI" id="CHEBI:30616"/>
    </ligand>
</feature>
<feature type="binding site" evidence="1">
    <location>
        <position position="319"/>
    </location>
    <ligand>
        <name>ATP</name>
        <dbReference type="ChEBI" id="CHEBI:30616"/>
    </ligand>
</feature>
<feature type="binding site" evidence="1">
    <location>
        <begin position="345"/>
        <end position="348"/>
    </location>
    <ligand>
        <name>ATP</name>
        <dbReference type="ChEBI" id="CHEBI:30616"/>
    </ligand>
</feature>
<proteinExistence type="inferred from homology"/>
<evidence type="ECO:0000255" key="1">
    <source>
        <dbReference type="HAMAP-Rule" id="MF_00145"/>
    </source>
</evidence>